<protein>
    <recommendedName>
        <fullName>Peptidase M20 domain-containing protein C757.05c</fullName>
    </recommendedName>
</protein>
<evidence type="ECO:0000250" key="1"/>
<evidence type="ECO:0000255" key="2"/>
<evidence type="ECO:0000305" key="3"/>
<proteinExistence type="inferred from homology"/>
<accession>O74916</accession>
<comment type="cofactor">
    <cofactor evidence="1">
        <name>Zn(2+)</name>
        <dbReference type="ChEBI" id="CHEBI:29105"/>
    </cofactor>
    <text evidence="1">Binds 2 Zn(2+) ions per subunit.</text>
</comment>
<comment type="subcellular location">
    <subcellularLocation>
        <location evidence="3">Secreted</location>
    </subcellularLocation>
</comment>
<comment type="similarity">
    <text evidence="3">Belongs to the peptidase M20A family.</text>
</comment>
<reference key="1">
    <citation type="journal article" date="2002" name="Nature">
        <title>The genome sequence of Schizosaccharomyces pombe.</title>
        <authorList>
            <person name="Wood V."/>
            <person name="Gwilliam R."/>
            <person name="Rajandream M.A."/>
            <person name="Lyne M.H."/>
            <person name="Lyne R."/>
            <person name="Stewart A."/>
            <person name="Sgouros J.G."/>
            <person name="Peat N."/>
            <person name="Hayles J."/>
            <person name="Baker S.G."/>
            <person name="Basham D."/>
            <person name="Bowman S."/>
            <person name="Brooks K."/>
            <person name="Brown D."/>
            <person name="Brown S."/>
            <person name="Chillingworth T."/>
            <person name="Churcher C.M."/>
            <person name="Collins M."/>
            <person name="Connor R."/>
            <person name="Cronin A."/>
            <person name="Davis P."/>
            <person name="Feltwell T."/>
            <person name="Fraser A."/>
            <person name="Gentles S."/>
            <person name="Goble A."/>
            <person name="Hamlin N."/>
            <person name="Harris D.E."/>
            <person name="Hidalgo J."/>
            <person name="Hodgson G."/>
            <person name="Holroyd S."/>
            <person name="Hornsby T."/>
            <person name="Howarth S."/>
            <person name="Huckle E.J."/>
            <person name="Hunt S."/>
            <person name="Jagels K."/>
            <person name="James K.D."/>
            <person name="Jones L."/>
            <person name="Jones M."/>
            <person name="Leather S."/>
            <person name="McDonald S."/>
            <person name="McLean J."/>
            <person name="Mooney P."/>
            <person name="Moule S."/>
            <person name="Mungall K.L."/>
            <person name="Murphy L.D."/>
            <person name="Niblett D."/>
            <person name="Odell C."/>
            <person name="Oliver K."/>
            <person name="O'Neil S."/>
            <person name="Pearson D."/>
            <person name="Quail M.A."/>
            <person name="Rabbinowitsch E."/>
            <person name="Rutherford K.M."/>
            <person name="Rutter S."/>
            <person name="Saunders D."/>
            <person name="Seeger K."/>
            <person name="Sharp S."/>
            <person name="Skelton J."/>
            <person name="Simmonds M.N."/>
            <person name="Squares R."/>
            <person name="Squares S."/>
            <person name="Stevens K."/>
            <person name="Taylor K."/>
            <person name="Taylor R.G."/>
            <person name="Tivey A."/>
            <person name="Walsh S.V."/>
            <person name="Warren T."/>
            <person name="Whitehead S."/>
            <person name="Woodward J.R."/>
            <person name="Volckaert G."/>
            <person name="Aert R."/>
            <person name="Robben J."/>
            <person name="Grymonprez B."/>
            <person name="Weltjens I."/>
            <person name="Vanstreels E."/>
            <person name="Rieger M."/>
            <person name="Schaefer M."/>
            <person name="Mueller-Auer S."/>
            <person name="Gabel C."/>
            <person name="Fuchs M."/>
            <person name="Duesterhoeft A."/>
            <person name="Fritzc C."/>
            <person name="Holzer E."/>
            <person name="Moestl D."/>
            <person name="Hilbert H."/>
            <person name="Borzym K."/>
            <person name="Langer I."/>
            <person name="Beck A."/>
            <person name="Lehrach H."/>
            <person name="Reinhardt R."/>
            <person name="Pohl T.M."/>
            <person name="Eger P."/>
            <person name="Zimmermann W."/>
            <person name="Wedler H."/>
            <person name="Wambutt R."/>
            <person name="Purnelle B."/>
            <person name="Goffeau A."/>
            <person name="Cadieu E."/>
            <person name="Dreano S."/>
            <person name="Gloux S."/>
            <person name="Lelaure V."/>
            <person name="Mottier S."/>
            <person name="Galibert F."/>
            <person name="Aves S.J."/>
            <person name="Xiang Z."/>
            <person name="Hunt C."/>
            <person name="Moore K."/>
            <person name="Hurst S.M."/>
            <person name="Lucas M."/>
            <person name="Rochet M."/>
            <person name="Gaillardin C."/>
            <person name="Tallada V.A."/>
            <person name="Garzon A."/>
            <person name="Thode G."/>
            <person name="Daga R.R."/>
            <person name="Cruzado L."/>
            <person name="Jimenez J."/>
            <person name="Sanchez M."/>
            <person name="del Rey F."/>
            <person name="Benito J."/>
            <person name="Dominguez A."/>
            <person name="Revuelta J.L."/>
            <person name="Moreno S."/>
            <person name="Armstrong J."/>
            <person name="Forsburg S.L."/>
            <person name="Cerutti L."/>
            <person name="Lowe T."/>
            <person name="McCombie W.R."/>
            <person name="Paulsen I."/>
            <person name="Potashkin J."/>
            <person name="Shpakovski G.V."/>
            <person name="Ussery D."/>
            <person name="Barrell B.G."/>
            <person name="Nurse P."/>
        </authorList>
    </citation>
    <scope>NUCLEOTIDE SEQUENCE [LARGE SCALE GENOMIC DNA]</scope>
    <source>
        <strain>972 / ATCC 24843</strain>
    </source>
</reference>
<gene>
    <name type="ORF">SPCC757.05c</name>
</gene>
<keyword id="KW-0325">Glycoprotein</keyword>
<keyword id="KW-0378">Hydrolase</keyword>
<keyword id="KW-0479">Metal-binding</keyword>
<keyword id="KW-0645">Protease</keyword>
<keyword id="KW-1185">Reference proteome</keyword>
<keyword id="KW-0964">Secreted</keyword>
<keyword id="KW-0732">Signal</keyword>
<keyword id="KW-0862">Zinc</keyword>
<sequence>MTMKISVWSLLIVIGYHLWMSPVLAGPLNFGYLSWGQHSILEQDSVQLISHQSLLPAGDNLISLHKSLVEIESLGGNEVNVSDFLKSYLESKGLTVELQRVSSNPTVRDNVYAYLGSQRNTKVVLTSHIDTVNPFLPYYIEGDKIHGRGSCDAKSSVAAQIFAMLELMSEGKVQEGDLSLLFVVGEEIDGIGMKTVANKLNADWEVAIFGEPTENKLGVGHKGNFRFDVYAHGKACHSGYPQEGFSAIEFLLRQCVKLMDTDLPKSKLLGPSTINIGTIEGGAAANILAAEAKAEVFIRVAEDIETIRDIAEDLFDTEHSEIKVIQYSPPQYLDYDIPGMDTVVLAYATDIPYLSDRKMKIYLFGPGSIREAHGPNEYVTFSQLFEGLNGYKRMVMYNLR</sequence>
<name>YJ75_SCHPO</name>
<dbReference type="EMBL" id="CU329672">
    <property type="protein sequence ID" value="CAA21230.1"/>
    <property type="molecule type" value="Genomic_DNA"/>
</dbReference>
<dbReference type="PIR" id="T41596">
    <property type="entry name" value="T41596"/>
</dbReference>
<dbReference type="RefSeq" id="NP_587680.1">
    <property type="nucleotide sequence ID" value="NM_001022675.2"/>
</dbReference>
<dbReference type="SMR" id="O74916"/>
<dbReference type="BioGRID" id="275793">
    <property type="interactions" value="3"/>
</dbReference>
<dbReference type="FunCoup" id="O74916">
    <property type="interactions" value="111"/>
</dbReference>
<dbReference type="STRING" id="284812.O74916"/>
<dbReference type="iPTMnet" id="O74916"/>
<dbReference type="PaxDb" id="4896-SPCC757.05c.1"/>
<dbReference type="EnsemblFungi" id="SPCC757.05c.1">
    <property type="protein sequence ID" value="SPCC757.05c.1:pep"/>
    <property type="gene ID" value="SPCC757.05c"/>
</dbReference>
<dbReference type="KEGG" id="spo:2539223"/>
<dbReference type="PomBase" id="SPCC757.05c"/>
<dbReference type="VEuPathDB" id="FungiDB:SPCC757.05c"/>
<dbReference type="eggNOG" id="KOG2275">
    <property type="taxonomic scope" value="Eukaryota"/>
</dbReference>
<dbReference type="HOGENOM" id="CLU_021802_3_0_1"/>
<dbReference type="InParanoid" id="O74916"/>
<dbReference type="OMA" id="HDEEIGC"/>
<dbReference type="PhylomeDB" id="O74916"/>
<dbReference type="PRO" id="PR:O74916"/>
<dbReference type="Proteomes" id="UP000002485">
    <property type="component" value="Chromosome III"/>
</dbReference>
<dbReference type="GO" id="GO:0005576">
    <property type="term" value="C:extracellular region"/>
    <property type="evidence" value="ECO:0007669"/>
    <property type="project" value="UniProtKB-SubCell"/>
</dbReference>
<dbReference type="GO" id="GO:0046872">
    <property type="term" value="F:metal ion binding"/>
    <property type="evidence" value="ECO:0007669"/>
    <property type="project" value="UniProtKB-KW"/>
</dbReference>
<dbReference type="GO" id="GO:0008237">
    <property type="term" value="F:metallopeptidase activity"/>
    <property type="evidence" value="ECO:0000255"/>
    <property type="project" value="PomBase"/>
</dbReference>
<dbReference type="GO" id="GO:1990748">
    <property type="term" value="P:cellular detoxification"/>
    <property type="evidence" value="ECO:0000303"/>
    <property type="project" value="PomBase"/>
</dbReference>
<dbReference type="GO" id="GO:0006751">
    <property type="term" value="P:glutathione catabolic process"/>
    <property type="evidence" value="ECO:0000266"/>
    <property type="project" value="PomBase"/>
</dbReference>
<dbReference type="GO" id="GO:0006508">
    <property type="term" value="P:proteolysis"/>
    <property type="evidence" value="ECO:0007669"/>
    <property type="project" value="UniProtKB-KW"/>
</dbReference>
<dbReference type="CDD" id="cd05652">
    <property type="entry name" value="M20_ArgE_DapE-like_fungal"/>
    <property type="match status" value="1"/>
</dbReference>
<dbReference type="Gene3D" id="3.30.70.360">
    <property type="match status" value="1"/>
</dbReference>
<dbReference type="Gene3D" id="3.40.630.10">
    <property type="entry name" value="Zn peptidases"/>
    <property type="match status" value="1"/>
</dbReference>
<dbReference type="InterPro" id="IPR036264">
    <property type="entry name" value="Bact_exopeptidase_dim_dom"/>
</dbReference>
<dbReference type="InterPro" id="IPR002933">
    <property type="entry name" value="Peptidase_M20"/>
</dbReference>
<dbReference type="InterPro" id="IPR011650">
    <property type="entry name" value="Peptidase_M20_dimer"/>
</dbReference>
<dbReference type="InterPro" id="IPR050072">
    <property type="entry name" value="Peptidase_M20A"/>
</dbReference>
<dbReference type="PANTHER" id="PTHR43808">
    <property type="entry name" value="ACETYLORNITHINE DEACETYLASE"/>
    <property type="match status" value="1"/>
</dbReference>
<dbReference type="PANTHER" id="PTHR43808:SF8">
    <property type="entry name" value="PEPTIDASE M20 DIMERISATION DOMAIN-CONTAINING PROTEIN"/>
    <property type="match status" value="1"/>
</dbReference>
<dbReference type="Pfam" id="PF07687">
    <property type="entry name" value="M20_dimer"/>
    <property type="match status" value="1"/>
</dbReference>
<dbReference type="Pfam" id="PF01546">
    <property type="entry name" value="Peptidase_M20"/>
    <property type="match status" value="1"/>
</dbReference>
<dbReference type="SUPFAM" id="SSF55031">
    <property type="entry name" value="Bacterial exopeptidase dimerisation domain"/>
    <property type="match status" value="1"/>
</dbReference>
<dbReference type="SUPFAM" id="SSF53187">
    <property type="entry name" value="Zn-dependent exopeptidases"/>
    <property type="match status" value="1"/>
</dbReference>
<organism>
    <name type="scientific">Schizosaccharomyces pombe (strain 972 / ATCC 24843)</name>
    <name type="common">Fission yeast</name>
    <dbReference type="NCBI Taxonomy" id="284812"/>
    <lineage>
        <taxon>Eukaryota</taxon>
        <taxon>Fungi</taxon>
        <taxon>Dikarya</taxon>
        <taxon>Ascomycota</taxon>
        <taxon>Taphrinomycotina</taxon>
        <taxon>Schizosaccharomycetes</taxon>
        <taxon>Schizosaccharomycetales</taxon>
        <taxon>Schizosaccharomycetaceae</taxon>
        <taxon>Schizosaccharomyces</taxon>
    </lineage>
</organism>
<feature type="signal peptide" evidence="2">
    <location>
        <begin position="1"/>
        <end position="25"/>
    </location>
</feature>
<feature type="chain" id="PRO_0000359400" description="Peptidase M20 domain-containing protein C757.05c">
    <location>
        <begin position="26"/>
        <end position="400"/>
    </location>
</feature>
<feature type="active site" description="Proton acceptor" evidence="1">
    <location>
        <position position="186"/>
    </location>
</feature>
<feature type="binding site" evidence="1">
    <location>
        <position position="152"/>
    </location>
    <ligand>
        <name>Zn(2+)</name>
        <dbReference type="ChEBI" id="CHEBI:29105"/>
        <label>1</label>
    </ligand>
</feature>
<feature type="binding site" evidence="1">
    <location>
        <position position="152"/>
    </location>
    <ligand>
        <name>Zn(2+)</name>
        <dbReference type="ChEBI" id="CHEBI:29105"/>
        <label>2</label>
    </ligand>
</feature>
<feature type="binding site" evidence="1">
    <location>
        <position position="187"/>
    </location>
    <ligand>
        <name>Zn(2+)</name>
        <dbReference type="ChEBI" id="CHEBI:29105"/>
        <label>1</label>
    </ligand>
</feature>
<feature type="glycosylation site" description="N-linked (GlcNAc...) asparagine" evidence="2">
    <location>
        <position position="80"/>
    </location>
</feature>